<protein>
    <recommendedName>
        <fullName evidence="1">Ribosome biogenesis protein erb1</fullName>
    </recommendedName>
    <alternativeName>
        <fullName evidence="1">Eukaryotic ribosome biogenesis protein 1</fullName>
    </alternativeName>
</protein>
<proteinExistence type="inferred from homology"/>
<keyword id="KW-0539">Nucleus</keyword>
<keyword id="KW-1185">Reference proteome</keyword>
<keyword id="KW-0677">Repeat</keyword>
<keyword id="KW-0690">Ribosome biogenesis</keyword>
<keyword id="KW-0698">rRNA processing</keyword>
<keyword id="KW-0853">WD repeat</keyword>
<organism>
    <name type="scientific">Neosartorya fischeri (strain ATCC 1020 / DSM 3700 / CBS 544.65 / FGSC A1164 / JCM 1740 / NRRL 181 / WB 181)</name>
    <name type="common">Aspergillus fischerianus</name>
    <dbReference type="NCBI Taxonomy" id="331117"/>
    <lineage>
        <taxon>Eukaryota</taxon>
        <taxon>Fungi</taxon>
        <taxon>Dikarya</taxon>
        <taxon>Ascomycota</taxon>
        <taxon>Pezizomycotina</taxon>
        <taxon>Eurotiomycetes</taxon>
        <taxon>Eurotiomycetidae</taxon>
        <taxon>Eurotiales</taxon>
        <taxon>Aspergillaceae</taxon>
        <taxon>Aspergillus</taxon>
        <taxon>Aspergillus subgen. Fumigati</taxon>
    </lineage>
</organism>
<feature type="chain" id="PRO_0000370435" description="Ribosome biogenesis protein erb1">
    <location>
        <begin position="1"/>
        <end position="790"/>
    </location>
</feature>
<feature type="repeat" description="WD 1">
    <location>
        <begin position="428"/>
        <end position="467"/>
    </location>
</feature>
<feature type="repeat" description="WD 2">
    <location>
        <begin position="471"/>
        <end position="511"/>
    </location>
</feature>
<feature type="repeat" description="WD 3">
    <location>
        <begin position="613"/>
        <end position="651"/>
    </location>
</feature>
<feature type="repeat" description="WD 4">
    <location>
        <begin position="654"/>
        <end position="699"/>
    </location>
</feature>
<feature type="repeat" description="WD 5">
    <location>
        <begin position="703"/>
        <end position="744"/>
    </location>
</feature>
<feature type="repeat" description="WD 6">
    <location>
        <begin position="760"/>
        <end position="790"/>
    </location>
</feature>
<feature type="region of interest" description="Disordered" evidence="2">
    <location>
        <begin position="1"/>
        <end position="143"/>
    </location>
</feature>
<feature type="region of interest" description="Disordered" evidence="2">
    <location>
        <begin position="321"/>
        <end position="346"/>
    </location>
</feature>
<feature type="compositionally biased region" description="Basic residues" evidence="2">
    <location>
        <begin position="1"/>
        <end position="12"/>
    </location>
</feature>
<feature type="compositionally biased region" description="Acidic residues" evidence="2">
    <location>
        <begin position="46"/>
        <end position="84"/>
    </location>
</feature>
<feature type="compositionally biased region" description="Basic and acidic residues" evidence="2">
    <location>
        <begin position="117"/>
        <end position="130"/>
    </location>
</feature>
<feature type="compositionally biased region" description="Acidic residues" evidence="2">
    <location>
        <begin position="133"/>
        <end position="143"/>
    </location>
</feature>
<feature type="compositionally biased region" description="Pro residues" evidence="2">
    <location>
        <begin position="321"/>
        <end position="337"/>
    </location>
</feature>
<sequence length="790" mass="87986">MNGSKASKKRKAVTRDVEEEAGVFSGDELNTDNLDGALSDNANDLSSDEDESDSEVELIDDFSDEDDEEEEDVLDSDEIPSDGEDLAKKKSNTAPGELGAAMDDGESSSEGEQLNYRIEKDANGNDRFVYDEINPDDNSEYSDIEENANTIGDIPLSFYDQYPHIGYDINGKKILRPAKGEALDALLDSIEIPKGWTGLTDPSTGKPLELSQEELELLRKVQMNEIPEDGYNPYEPTVEWFTSQQEIMPLSAAPEPKRRFVPSKHEAKRVMKIVKAIREGRILPFKPPTEEDEEDDTIIKYDLWADEAERKDHPMHIPAPKLPPPGYEESYHPPPEYLPSQKERKAWEEADPEDRASEFLPNDFGSLRRVPGYENFVKEKFERCLDLYLAPRVRRSKLNIDPESLLPKLPSPEELKPFPTACATVFRGHKGRVRTLAVDPSGLLLATGGDDGTVRVWELLTGRQLWSVKLSEEDPVNVVRWRPGKDALILAAAAGDDIFLAVPPIVDPAIEKASLDILDAGWGYAASVPPPTPAEANKKNNPPKWMRPSSSLADLGVCAVIPLRYVAKSLSWHRRGDYFVTVCPGSSTPASVAIAIHTLSKHLTQYPFRRRIKGGGPPQAAHFHPSKPILFVANQRSIRAYDLSRQLLVKILQPGARWISSFDIHPTSSTASGGDNLIVGSYDRRLLWHDLELSQRPYKTLRYHRKAIRAVKFHPGGRYPLFADASDDGSLQIFHGSVTGDMLSNATIVPLKVLKGHKITGELGVLDVDWHPREPWCVSAGADGTCRLWM</sequence>
<comment type="function">
    <text evidence="1">Component of the NOP7 complex, which is required for maturation of the 25S and 5.8S ribosomal RNAs and formation of the 60S ribosome.</text>
</comment>
<comment type="subunit">
    <text evidence="1">Component of the NOP7 complex, composed of erb1, nop7 and ytm1. The complex is held together by erb1, which interacts with nop7 via its N-terminal domain and with ytm1 via a high-affinity interaction between the seven-bladed beta-propeller domains of the 2 proteins. The NOP7 complex associates with the 66S pre-ribosome.</text>
</comment>
<comment type="subcellular location">
    <subcellularLocation>
        <location evidence="1">Nucleus</location>
        <location evidence="1">Nucleolus</location>
    </subcellularLocation>
    <subcellularLocation>
        <location evidence="1">Nucleus</location>
        <location evidence="1">Nucleoplasm</location>
    </subcellularLocation>
</comment>
<comment type="similarity">
    <text evidence="1">Belongs to the WD repeat BOP1/ERB1 family.</text>
</comment>
<reference key="1">
    <citation type="journal article" date="2008" name="PLoS Genet.">
        <title>Genomic islands in the pathogenic filamentous fungus Aspergillus fumigatus.</title>
        <authorList>
            <person name="Fedorova N.D."/>
            <person name="Khaldi N."/>
            <person name="Joardar V.S."/>
            <person name="Maiti R."/>
            <person name="Amedeo P."/>
            <person name="Anderson M.J."/>
            <person name="Crabtree J."/>
            <person name="Silva J.C."/>
            <person name="Badger J.H."/>
            <person name="Albarraq A."/>
            <person name="Angiuoli S."/>
            <person name="Bussey H."/>
            <person name="Bowyer P."/>
            <person name="Cotty P.J."/>
            <person name="Dyer P.S."/>
            <person name="Egan A."/>
            <person name="Galens K."/>
            <person name="Fraser-Liggett C.M."/>
            <person name="Haas B.J."/>
            <person name="Inman J.M."/>
            <person name="Kent R."/>
            <person name="Lemieux S."/>
            <person name="Malavazi I."/>
            <person name="Orvis J."/>
            <person name="Roemer T."/>
            <person name="Ronning C.M."/>
            <person name="Sundaram J.P."/>
            <person name="Sutton G."/>
            <person name="Turner G."/>
            <person name="Venter J.C."/>
            <person name="White O.R."/>
            <person name="Whitty B.R."/>
            <person name="Youngman P."/>
            <person name="Wolfe K.H."/>
            <person name="Goldman G.H."/>
            <person name="Wortman J.R."/>
            <person name="Jiang B."/>
            <person name="Denning D.W."/>
            <person name="Nierman W.C."/>
        </authorList>
    </citation>
    <scope>NUCLEOTIDE SEQUENCE [LARGE SCALE GENOMIC DNA]</scope>
    <source>
        <strain>ATCC 1020 / DSM 3700 / CBS 544.65 / FGSC A1164 / JCM 1740 / NRRL 181 / WB 181</strain>
    </source>
</reference>
<accession>A1D3F5</accession>
<name>ERB1_NEOFI</name>
<gene>
    <name type="primary">erb1</name>
    <name type="ORF">NFIA_016440</name>
</gene>
<dbReference type="EMBL" id="DS027688">
    <property type="protein sequence ID" value="EAW22948.1"/>
    <property type="molecule type" value="Genomic_DNA"/>
</dbReference>
<dbReference type="RefSeq" id="XP_001264845.1">
    <property type="nucleotide sequence ID" value="XM_001264844.1"/>
</dbReference>
<dbReference type="SMR" id="A1D3F5"/>
<dbReference type="STRING" id="331117.A1D3F5"/>
<dbReference type="EnsemblFungi" id="EAW22948">
    <property type="protein sequence ID" value="EAW22948"/>
    <property type="gene ID" value="NFIA_016440"/>
</dbReference>
<dbReference type="GeneID" id="4591388"/>
<dbReference type="KEGG" id="nfi:NFIA_016440"/>
<dbReference type="VEuPathDB" id="FungiDB:NFIA_016440"/>
<dbReference type="eggNOG" id="KOG0650">
    <property type="taxonomic scope" value="Eukaryota"/>
</dbReference>
<dbReference type="HOGENOM" id="CLU_011390_0_1_1"/>
<dbReference type="OMA" id="MRPAKGE"/>
<dbReference type="OrthoDB" id="5571054at2759"/>
<dbReference type="Proteomes" id="UP000006702">
    <property type="component" value="Unassembled WGS sequence"/>
</dbReference>
<dbReference type="GO" id="GO:0005654">
    <property type="term" value="C:nucleoplasm"/>
    <property type="evidence" value="ECO:0007669"/>
    <property type="project" value="UniProtKB-SubCell"/>
</dbReference>
<dbReference type="GO" id="GO:0070545">
    <property type="term" value="C:PeBoW complex"/>
    <property type="evidence" value="ECO:0007669"/>
    <property type="project" value="EnsemblFungi"/>
</dbReference>
<dbReference type="GO" id="GO:0030687">
    <property type="term" value="C:preribosome, large subunit precursor"/>
    <property type="evidence" value="ECO:0007669"/>
    <property type="project" value="UniProtKB-UniRule"/>
</dbReference>
<dbReference type="GO" id="GO:0070180">
    <property type="term" value="F:large ribosomal subunit rRNA binding"/>
    <property type="evidence" value="ECO:0007669"/>
    <property type="project" value="EnsemblFungi"/>
</dbReference>
<dbReference type="GO" id="GO:0043021">
    <property type="term" value="F:ribonucleoprotein complex binding"/>
    <property type="evidence" value="ECO:0007669"/>
    <property type="project" value="UniProtKB-UniRule"/>
</dbReference>
<dbReference type="GO" id="GO:0000466">
    <property type="term" value="P:maturation of 5.8S rRNA from tricistronic rRNA transcript (SSU-rRNA, 5.8S rRNA, LSU-rRNA)"/>
    <property type="evidence" value="ECO:0007669"/>
    <property type="project" value="UniProtKB-UniRule"/>
</dbReference>
<dbReference type="GO" id="GO:0000463">
    <property type="term" value="P:maturation of LSU-rRNA from tricistronic rRNA transcript (SSU-rRNA, 5.8S rRNA, LSU-rRNA)"/>
    <property type="evidence" value="ECO:0007669"/>
    <property type="project" value="UniProtKB-UniRule"/>
</dbReference>
<dbReference type="FunFam" id="2.130.10.10:FF:000061">
    <property type="entry name" value="Ribosome biogenesis protein BOP1 homolog"/>
    <property type="match status" value="1"/>
</dbReference>
<dbReference type="Gene3D" id="2.130.10.10">
    <property type="entry name" value="YVTN repeat-like/Quinoprotein amine dehydrogenase"/>
    <property type="match status" value="1"/>
</dbReference>
<dbReference type="HAMAP" id="MF_03027">
    <property type="entry name" value="BOP1"/>
    <property type="match status" value="1"/>
</dbReference>
<dbReference type="InterPro" id="IPR028598">
    <property type="entry name" value="BOP1/Erb1"/>
</dbReference>
<dbReference type="InterPro" id="IPR012953">
    <property type="entry name" value="BOP1_N_dom"/>
</dbReference>
<dbReference type="InterPro" id="IPR015943">
    <property type="entry name" value="WD40/YVTN_repeat-like_dom_sf"/>
</dbReference>
<dbReference type="InterPro" id="IPR019775">
    <property type="entry name" value="WD40_repeat_CS"/>
</dbReference>
<dbReference type="InterPro" id="IPR036322">
    <property type="entry name" value="WD40_repeat_dom_sf"/>
</dbReference>
<dbReference type="InterPro" id="IPR001680">
    <property type="entry name" value="WD40_rpt"/>
</dbReference>
<dbReference type="PANTHER" id="PTHR17605:SF0">
    <property type="entry name" value="RIBOSOME BIOGENESIS PROTEIN BOP1"/>
    <property type="match status" value="1"/>
</dbReference>
<dbReference type="PANTHER" id="PTHR17605">
    <property type="entry name" value="RIBOSOME BIOGENESIS PROTEIN BOP1 BLOCK OF PROLIFERATION 1 PROTEIN"/>
    <property type="match status" value="1"/>
</dbReference>
<dbReference type="Pfam" id="PF08145">
    <property type="entry name" value="BOP1NT"/>
    <property type="match status" value="1"/>
</dbReference>
<dbReference type="Pfam" id="PF00400">
    <property type="entry name" value="WD40"/>
    <property type="match status" value="3"/>
</dbReference>
<dbReference type="SMART" id="SM01035">
    <property type="entry name" value="BOP1NT"/>
    <property type="match status" value="1"/>
</dbReference>
<dbReference type="SMART" id="SM00320">
    <property type="entry name" value="WD40"/>
    <property type="match status" value="4"/>
</dbReference>
<dbReference type="SUPFAM" id="SSF50978">
    <property type="entry name" value="WD40 repeat-like"/>
    <property type="match status" value="1"/>
</dbReference>
<dbReference type="PROSITE" id="PS00678">
    <property type="entry name" value="WD_REPEATS_1"/>
    <property type="match status" value="1"/>
</dbReference>
<dbReference type="PROSITE" id="PS50082">
    <property type="entry name" value="WD_REPEATS_2"/>
    <property type="match status" value="2"/>
</dbReference>
<dbReference type="PROSITE" id="PS50294">
    <property type="entry name" value="WD_REPEATS_REGION"/>
    <property type="match status" value="1"/>
</dbReference>
<evidence type="ECO:0000255" key="1">
    <source>
        <dbReference type="HAMAP-Rule" id="MF_03027"/>
    </source>
</evidence>
<evidence type="ECO:0000256" key="2">
    <source>
        <dbReference type="SAM" id="MobiDB-lite"/>
    </source>
</evidence>